<sequence>MAKCDICGKGVGFGKKYSHSHIRTNRQWKPNIQPVKAIVDGTPKKIYVCTRCLRSGKVERAI</sequence>
<accession>Q0AYX5</accession>
<feature type="chain" id="PRO_1000007391" description="Large ribosomal subunit protein bL28">
    <location>
        <begin position="1"/>
        <end position="62"/>
    </location>
</feature>
<reference key="1">
    <citation type="journal article" date="2010" name="Environ. Microbiol.">
        <title>The genome of Syntrophomonas wolfei: new insights into syntrophic metabolism and biohydrogen production.</title>
        <authorList>
            <person name="Sieber J.R."/>
            <person name="Sims D.R."/>
            <person name="Han C."/>
            <person name="Kim E."/>
            <person name="Lykidis A."/>
            <person name="Lapidus A.L."/>
            <person name="McDonnald E."/>
            <person name="Rohlin L."/>
            <person name="Culley D.E."/>
            <person name="Gunsalus R."/>
            <person name="McInerney M.J."/>
        </authorList>
    </citation>
    <scope>NUCLEOTIDE SEQUENCE [LARGE SCALE GENOMIC DNA]</scope>
    <source>
        <strain>DSM 2245B / Goettingen</strain>
    </source>
</reference>
<name>RL28_SYNWW</name>
<dbReference type="EMBL" id="CP000448">
    <property type="protein sequence ID" value="ABI68079.1"/>
    <property type="molecule type" value="Genomic_DNA"/>
</dbReference>
<dbReference type="RefSeq" id="WP_011640184.1">
    <property type="nucleotide sequence ID" value="NC_008346.1"/>
</dbReference>
<dbReference type="SMR" id="Q0AYX5"/>
<dbReference type="STRING" id="335541.Swol_0757"/>
<dbReference type="KEGG" id="swo:Swol_0757"/>
<dbReference type="eggNOG" id="COG0227">
    <property type="taxonomic scope" value="Bacteria"/>
</dbReference>
<dbReference type="HOGENOM" id="CLU_064548_7_0_9"/>
<dbReference type="OrthoDB" id="9805609at2"/>
<dbReference type="Proteomes" id="UP000001968">
    <property type="component" value="Chromosome"/>
</dbReference>
<dbReference type="GO" id="GO:1990904">
    <property type="term" value="C:ribonucleoprotein complex"/>
    <property type="evidence" value="ECO:0007669"/>
    <property type="project" value="UniProtKB-KW"/>
</dbReference>
<dbReference type="GO" id="GO:0005840">
    <property type="term" value="C:ribosome"/>
    <property type="evidence" value="ECO:0007669"/>
    <property type="project" value="UniProtKB-KW"/>
</dbReference>
<dbReference type="GO" id="GO:0003735">
    <property type="term" value="F:structural constituent of ribosome"/>
    <property type="evidence" value="ECO:0007669"/>
    <property type="project" value="InterPro"/>
</dbReference>
<dbReference type="GO" id="GO:0006412">
    <property type="term" value="P:translation"/>
    <property type="evidence" value="ECO:0007669"/>
    <property type="project" value="UniProtKB-UniRule"/>
</dbReference>
<dbReference type="Gene3D" id="2.30.170.40">
    <property type="entry name" value="Ribosomal protein L28/L24"/>
    <property type="match status" value="1"/>
</dbReference>
<dbReference type="HAMAP" id="MF_00373">
    <property type="entry name" value="Ribosomal_bL28"/>
    <property type="match status" value="1"/>
</dbReference>
<dbReference type="InterPro" id="IPR050096">
    <property type="entry name" value="Bacterial_rp_bL28"/>
</dbReference>
<dbReference type="InterPro" id="IPR026569">
    <property type="entry name" value="Ribosomal_bL28"/>
</dbReference>
<dbReference type="InterPro" id="IPR034704">
    <property type="entry name" value="Ribosomal_bL28/bL31-like_sf"/>
</dbReference>
<dbReference type="InterPro" id="IPR001383">
    <property type="entry name" value="Ribosomal_bL28_bact-type"/>
</dbReference>
<dbReference type="InterPro" id="IPR037147">
    <property type="entry name" value="Ribosomal_bL28_sf"/>
</dbReference>
<dbReference type="NCBIfam" id="TIGR00009">
    <property type="entry name" value="L28"/>
    <property type="match status" value="1"/>
</dbReference>
<dbReference type="PANTHER" id="PTHR39080">
    <property type="entry name" value="50S RIBOSOMAL PROTEIN L28"/>
    <property type="match status" value="1"/>
</dbReference>
<dbReference type="PANTHER" id="PTHR39080:SF1">
    <property type="entry name" value="LARGE RIBOSOMAL SUBUNIT PROTEIN BL28A"/>
    <property type="match status" value="1"/>
</dbReference>
<dbReference type="Pfam" id="PF00830">
    <property type="entry name" value="Ribosomal_L28"/>
    <property type="match status" value="1"/>
</dbReference>
<dbReference type="SUPFAM" id="SSF143800">
    <property type="entry name" value="L28p-like"/>
    <property type="match status" value="1"/>
</dbReference>
<comment type="similarity">
    <text evidence="1">Belongs to the bacterial ribosomal protein bL28 family.</text>
</comment>
<proteinExistence type="inferred from homology"/>
<keyword id="KW-1185">Reference proteome</keyword>
<keyword id="KW-0687">Ribonucleoprotein</keyword>
<keyword id="KW-0689">Ribosomal protein</keyword>
<gene>
    <name evidence="1" type="primary">rpmB</name>
    <name type="ordered locus">Swol_0757</name>
</gene>
<protein>
    <recommendedName>
        <fullName evidence="1">Large ribosomal subunit protein bL28</fullName>
    </recommendedName>
    <alternativeName>
        <fullName evidence="2">50S ribosomal protein L28</fullName>
    </alternativeName>
</protein>
<evidence type="ECO:0000255" key="1">
    <source>
        <dbReference type="HAMAP-Rule" id="MF_00373"/>
    </source>
</evidence>
<evidence type="ECO:0000305" key="2"/>
<organism>
    <name type="scientific">Syntrophomonas wolfei subsp. wolfei (strain DSM 2245B / Goettingen)</name>
    <dbReference type="NCBI Taxonomy" id="335541"/>
    <lineage>
        <taxon>Bacteria</taxon>
        <taxon>Bacillati</taxon>
        <taxon>Bacillota</taxon>
        <taxon>Clostridia</taxon>
        <taxon>Eubacteriales</taxon>
        <taxon>Syntrophomonadaceae</taxon>
        <taxon>Syntrophomonas</taxon>
    </lineage>
</organism>